<gene>
    <name type="primary">grxC2</name>
    <name type="synonym">grlA</name>
    <name type="ordered locus">RT0730</name>
</gene>
<protein>
    <recommendedName>
        <fullName>Probable monothiol glutaredoxin 2</fullName>
    </recommendedName>
</protein>
<accession>Q68W05</accession>
<comment type="similarity">
    <text evidence="3">Belongs to the glutaredoxin family. Monothiol subfamily.</text>
</comment>
<feature type="chain" id="PRO_0000288733" description="Probable monothiol glutaredoxin 2">
    <location>
        <begin position="1"/>
        <end position="111"/>
    </location>
</feature>
<feature type="domain" description="Glutaredoxin" evidence="2">
    <location>
        <begin position="7"/>
        <end position="109"/>
    </location>
</feature>
<feature type="binding site" evidence="1">
    <location>
        <position position="24"/>
    </location>
    <ligand>
        <name>glutathione</name>
        <dbReference type="ChEBI" id="CHEBI:57925"/>
    </ligand>
</feature>
<feature type="binding site" evidence="1">
    <location>
        <position position="32"/>
    </location>
    <ligand>
        <name>[2Fe-2S] cluster</name>
        <dbReference type="ChEBI" id="CHEBI:190135"/>
        <note>ligand shared between dimeric partners</note>
    </ligand>
</feature>
<feature type="binding site" evidence="1">
    <location>
        <position position="61"/>
    </location>
    <ligand>
        <name>glutathione</name>
        <dbReference type="ChEBI" id="CHEBI:57925"/>
    </ligand>
</feature>
<feature type="binding site" evidence="1">
    <location>
        <position position="73"/>
    </location>
    <ligand>
        <name>glutathione</name>
        <dbReference type="ChEBI" id="CHEBI:57925"/>
    </ligand>
</feature>
<feature type="binding site" evidence="1">
    <location>
        <begin position="86"/>
        <end position="87"/>
    </location>
    <ligand>
        <name>glutathione</name>
        <dbReference type="ChEBI" id="CHEBI:57925"/>
    </ligand>
</feature>
<name>GLRX2_RICTY</name>
<organism>
    <name type="scientific">Rickettsia typhi (strain ATCC VR-144 / Wilmington)</name>
    <dbReference type="NCBI Taxonomy" id="257363"/>
    <lineage>
        <taxon>Bacteria</taxon>
        <taxon>Pseudomonadati</taxon>
        <taxon>Pseudomonadota</taxon>
        <taxon>Alphaproteobacteria</taxon>
        <taxon>Rickettsiales</taxon>
        <taxon>Rickettsiaceae</taxon>
        <taxon>Rickettsieae</taxon>
        <taxon>Rickettsia</taxon>
        <taxon>typhus group</taxon>
    </lineage>
</organism>
<sequence>MMENKNLKFIQNAIKKNKVVLFMKGTKEMPACGFSGTVVAILNKLGVEFSDINVLFDTSLREDLKKFSDWPTFPQLYINGELVGGCDIVKELYQNGELEKMLKDETKLIKN</sequence>
<reference key="1">
    <citation type="journal article" date="2004" name="J. Bacteriol.">
        <title>Complete genome sequence of Rickettsia typhi and comparison with sequences of other Rickettsiae.</title>
        <authorList>
            <person name="McLeod M.P."/>
            <person name="Qin X."/>
            <person name="Karpathy S.E."/>
            <person name="Gioia J."/>
            <person name="Highlander S.K."/>
            <person name="Fox G.E."/>
            <person name="McNeill T.Z."/>
            <person name="Jiang H."/>
            <person name="Muzny D."/>
            <person name="Jacob L.S."/>
            <person name="Hawes A.C."/>
            <person name="Sodergren E."/>
            <person name="Gill R."/>
            <person name="Hume J."/>
            <person name="Morgan M."/>
            <person name="Fan G."/>
            <person name="Amin A.G."/>
            <person name="Gibbs R.A."/>
            <person name="Hong C."/>
            <person name="Yu X.-J."/>
            <person name="Walker D.H."/>
            <person name="Weinstock G.M."/>
        </authorList>
    </citation>
    <scope>NUCLEOTIDE SEQUENCE [LARGE SCALE GENOMIC DNA]</scope>
    <source>
        <strain>ATCC VR-144 / Wilmington</strain>
    </source>
</reference>
<dbReference type="EMBL" id="AE017197">
    <property type="protein sequence ID" value="AAU04187.1"/>
    <property type="molecule type" value="Genomic_DNA"/>
</dbReference>
<dbReference type="SMR" id="Q68W05"/>
<dbReference type="KEGG" id="rty:RT0730"/>
<dbReference type="eggNOG" id="COG0278">
    <property type="taxonomic scope" value="Bacteria"/>
</dbReference>
<dbReference type="HOGENOM" id="CLU_026126_2_1_5"/>
<dbReference type="OrthoDB" id="9804115at2"/>
<dbReference type="Proteomes" id="UP000000604">
    <property type="component" value="Chromosome"/>
</dbReference>
<dbReference type="GO" id="GO:0051537">
    <property type="term" value="F:2 iron, 2 sulfur cluster binding"/>
    <property type="evidence" value="ECO:0007669"/>
    <property type="project" value="UniProtKB-KW"/>
</dbReference>
<dbReference type="GO" id="GO:0015036">
    <property type="term" value="F:disulfide oxidoreductase activity"/>
    <property type="evidence" value="ECO:0007669"/>
    <property type="project" value="InterPro"/>
</dbReference>
<dbReference type="GO" id="GO:0046872">
    <property type="term" value="F:metal ion binding"/>
    <property type="evidence" value="ECO:0007669"/>
    <property type="project" value="UniProtKB-KW"/>
</dbReference>
<dbReference type="CDD" id="cd03028">
    <property type="entry name" value="GRX_PICOT_like"/>
    <property type="match status" value="1"/>
</dbReference>
<dbReference type="FunFam" id="3.40.30.10:FF:000005">
    <property type="entry name" value="Glutaredoxin 5"/>
    <property type="match status" value="1"/>
</dbReference>
<dbReference type="Gene3D" id="3.40.30.10">
    <property type="entry name" value="Glutaredoxin"/>
    <property type="match status" value="1"/>
</dbReference>
<dbReference type="InterPro" id="IPR002109">
    <property type="entry name" value="Glutaredoxin"/>
</dbReference>
<dbReference type="InterPro" id="IPR033658">
    <property type="entry name" value="GRX_PICOT-like"/>
</dbReference>
<dbReference type="InterPro" id="IPR014434">
    <property type="entry name" value="Monothiol_GRX"/>
</dbReference>
<dbReference type="InterPro" id="IPR004480">
    <property type="entry name" value="Monothiol_GRX-rel"/>
</dbReference>
<dbReference type="InterPro" id="IPR036249">
    <property type="entry name" value="Thioredoxin-like_sf"/>
</dbReference>
<dbReference type="NCBIfam" id="TIGR00365">
    <property type="entry name" value="Grx4 family monothiol glutaredoxin"/>
    <property type="match status" value="1"/>
</dbReference>
<dbReference type="PANTHER" id="PTHR10293">
    <property type="entry name" value="GLUTAREDOXIN FAMILY MEMBER"/>
    <property type="match status" value="1"/>
</dbReference>
<dbReference type="PANTHER" id="PTHR10293:SF16">
    <property type="entry name" value="GLUTAREDOXIN-RELATED PROTEIN 5, MITOCHONDRIAL"/>
    <property type="match status" value="1"/>
</dbReference>
<dbReference type="Pfam" id="PF00462">
    <property type="entry name" value="Glutaredoxin"/>
    <property type="match status" value="1"/>
</dbReference>
<dbReference type="PIRSF" id="PIRSF005894">
    <property type="entry name" value="Monothiol_GRX"/>
    <property type="match status" value="1"/>
</dbReference>
<dbReference type="SUPFAM" id="SSF52833">
    <property type="entry name" value="Thioredoxin-like"/>
    <property type="match status" value="1"/>
</dbReference>
<dbReference type="PROSITE" id="PS51354">
    <property type="entry name" value="GLUTAREDOXIN_2"/>
    <property type="match status" value="1"/>
</dbReference>
<evidence type="ECO:0000250" key="1"/>
<evidence type="ECO:0000255" key="2">
    <source>
        <dbReference type="PROSITE-ProRule" id="PRU00686"/>
    </source>
</evidence>
<evidence type="ECO:0000305" key="3"/>
<keyword id="KW-0001">2Fe-2S</keyword>
<keyword id="KW-0408">Iron</keyword>
<keyword id="KW-0411">Iron-sulfur</keyword>
<keyword id="KW-0479">Metal-binding</keyword>
<keyword id="KW-0676">Redox-active center</keyword>
<proteinExistence type="inferred from homology"/>